<name>ENDSD_STRDY</name>
<evidence type="ECO:0000250" key="1">
    <source>
        <dbReference type="UniProtKB" id="Q99Y92"/>
    </source>
</evidence>
<evidence type="ECO:0000255" key="2"/>
<evidence type="ECO:0000255" key="3">
    <source>
        <dbReference type="PROSITE-ProRule" id="PRU01258"/>
    </source>
</evidence>
<evidence type="ECO:0000255" key="4">
    <source>
        <dbReference type="PROSITE-ProRule" id="PRU10053"/>
    </source>
</evidence>
<evidence type="ECO:0000269" key="5">
    <source>
    </source>
</evidence>
<evidence type="ECO:0000303" key="6">
    <source>
    </source>
</evidence>
<evidence type="ECO:0000305" key="7"/>
<evidence type="ECO:0000305" key="8">
    <source>
    </source>
</evidence>
<comment type="function">
    <text evidence="1 5">Endoglucosidase that acts as a host immune evasion factor by mediating hydrolysis of the N-linked glycan from the Fc region of host immunoglobulin-gamma (IgG) during infection (PubMed:27200457). Specifically catalyzes the hydrolysis of the beta-1,4 linkage between the first two N-acetylglucosamine residues of the complex-type N-linked glycan located on 'Asn-297' of the Fc region of IgG antibodies (IGHG1, IGHG2, IGHG3 or IGHG4), thereby preventing interaction between IgGs and Fc receptors and ability to activate the complement pathway (By similarity). Shows a specificity for biantennary complex type N-glycans; does neither cleave larger complex type glycans nor oligomannose and nor hybrid-type glycans (PubMed:27200457). Specifically acts on IgGs; does not act on immunoglobulin alpha, beta, delta or mu (PubMed:27200457).</text>
</comment>
<comment type="catalytic activity">
    <reaction evidence="8">
        <text>an N(4)-(oligosaccharide-(1-&gt;3)-[oligosaccharide-(1-&gt;6)]-beta-D-Man-(1-&gt;4)-beta-D-GlcNAc-(1-&gt;4)-alpha-D-GlcNAc)-L-asparaginyl-[protein] + H2O = an oligosaccharide-(1-&gt;3)-[oligosaccharide-(1-&gt;6)]-beta-D-Man-(1-&gt;4)-D-GlcNAc + N(4)-(N-acetyl-beta-D-glucosaminyl)-L-asparaginyl-[protein]</text>
        <dbReference type="Rhea" id="RHEA:73067"/>
        <dbReference type="Rhea" id="RHEA-COMP:12603"/>
        <dbReference type="Rhea" id="RHEA-COMP:18176"/>
        <dbReference type="ChEBI" id="CHEBI:15377"/>
        <dbReference type="ChEBI" id="CHEBI:132248"/>
        <dbReference type="ChEBI" id="CHEBI:192714"/>
        <dbReference type="ChEBI" id="CHEBI:192715"/>
        <dbReference type="EC" id="3.2.1.96"/>
    </reaction>
</comment>
<comment type="subcellular location">
    <subcellularLocation>
        <location evidence="5">Secreted</location>
    </subcellularLocation>
    <subcellularLocation>
        <location evidence="1">Host extracellular space</location>
    </subcellularLocation>
    <text evidence="5">Secretion is tightly regulated by carbohydrate composition in the growth medium.</text>
</comment>
<comment type="similarity">
    <text evidence="7">Belongs to the glycosyl hydrolase 18 family.</text>
</comment>
<gene>
    <name evidence="6" type="primary">endoSd</name>
</gene>
<organism>
    <name type="scientific">Streptococcus dysgalactiae</name>
    <dbReference type="NCBI Taxonomy" id="1334"/>
    <lineage>
        <taxon>Bacteria</taxon>
        <taxon>Bacillati</taxon>
        <taxon>Bacillota</taxon>
        <taxon>Bacilli</taxon>
        <taxon>Lactobacillales</taxon>
        <taxon>Streptococcaceae</taxon>
        <taxon>Streptococcus</taxon>
    </lineage>
</organism>
<proteinExistence type="evidence at protein level"/>
<reference key="1">
    <citation type="journal article" date="2016" name="Future Microbiol.">
        <title>EndoSd: an IgG glycan hydrolyzing enzyme in Streptococcus dysgalactiae subspecies dysgalactiae.</title>
        <authorList>
            <person name="Shadnezhad A."/>
            <person name="Naegeli A."/>
            <person name="Sjoegren J."/>
            <person name="Adamczyk B."/>
            <person name="Leo F."/>
            <person name="Allhorn M."/>
            <person name="Karlsson N.G."/>
            <person name="Jensen A."/>
            <person name="Collin M."/>
        </authorList>
    </citation>
    <scope>NUCLEOTIDE SEQUENCE [GENOMIC DNA]</scope>
    <scope>FUNCTION</scope>
    <scope>CATALYTIC ACTIVITY</scope>
    <scope>SUBCELLULAR LOCATION</scope>
    <source>
        <strain>SK_1242</strain>
        <strain>SK_1244</strain>
    </source>
</reference>
<keyword id="KW-0106">Calcium</keyword>
<keyword id="KW-0326">Glycosidase</keyword>
<keyword id="KW-0378">Hydrolase</keyword>
<keyword id="KW-0433">Leucine-rich repeat</keyword>
<keyword id="KW-0479">Metal-binding</keyword>
<keyword id="KW-0677">Repeat</keyword>
<keyword id="KW-0964">Secreted</keyword>
<keyword id="KW-0732">Signal</keyword>
<keyword id="KW-0843">Virulence</keyword>
<feature type="signal peptide" evidence="2">
    <location>
        <begin position="1"/>
        <end position="36"/>
    </location>
</feature>
<feature type="chain" id="PRO_5008247535" description="Endo-beta-N-acetylglucosaminidase EndoSd" evidence="2">
    <location>
        <begin position="37"/>
        <end position="847"/>
    </location>
</feature>
<feature type="domain" description="GH18" evidence="3">
    <location>
        <begin position="65"/>
        <end position="377"/>
    </location>
</feature>
<feature type="repeat" description="LRR 1" evidence="2">
    <location>
        <begin position="423"/>
        <end position="446"/>
    </location>
</feature>
<feature type="repeat" description="LRR 2" evidence="2">
    <location>
        <begin position="447"/>
        <end position="470"/>
    </location>
</feature>
<feature type="repeat" description="LRR 3" evidence="2">
    <location>
        <begin position="483"/>
        <end position="506"/>
    </location>
</feature>
<feature type="repeat" description="LRR 4" evidence="2">
    <location>
        <begin position="507"/>
        <end position="530"/>
    </location>
</feature>
<feature type="region of interest" description="carbohydrate-binding module (CBM)" evidence="1">
    <location>
        <begin position="683"/>
        <end position="836"/>
    </location>
</feature>
<feature type="active site" description="Proton donor" evidence="4">
    <location>
        <position position="186"/>
    </location>
</feature>
<feature type="binding site" evidence="1">
    <location>
        <position position="107"/>
    </location>
    <ligand>
        <name>a glycoprotein</name>
        <dbReference type="ChEBI" id="CHEBI:17089"/>
    </ligand>
</feature>
<feature type="binding site" evidence="1">
    <location>
        <position position="188"/>
    </location>
    <ligand>
        <name>a glycoprotein</name>
        <dbReference type="ChEBI" id="CHEBI:17089"/>
    </ligand>
</feature>
<feature type="binding site" evidence="1">
    <location>
        <position position="250"/>
    </location>
    <ligand>
        <name>a glycoprotein</name>
        <dbReference type="ChEBI" id="CHEBI:17089"/>
    </ligand>
</feature>
<feature type="binding site" evidence="1">
    <location>
        <position position="252"/>
    </location>
    <ligand>
        <name>a glycoprotein</name>
        <dbReference type="ChEBI" id="CHEBI:17089"/>
    </ligand>
</feature>
<feature type="binding site" evidence="1">
    <location>
        <position position="288"/>
    </location>
    <ligand>
        <name>a glycoprotein</name>
        <dbReference type="ChEBI" id="CHEBI:17089"/>
    </ligand>
</feature>
<feature type="binding site" evidence="1">
    <location>
        <position position="289"/>
    </location>
    <ligand>
        <name>a glycoprotein</name>
        <dbReference type="ChEBI" id="CHEBI:17089"/>
    </ligand>
</feature>
<feature type="binding site" evidence="1">
    <location>
        <position position="295"/>
    </location>
    <ligand>
        <name>a glycoprotein</name>
        <dbReference type="ChEBI" id="CHEBI:17089"/>
    </ligand>
</feature>
<feature type="binding site" evidence="1">
    <location>
        <position position="339"/>
    </location>
    <ligand>
        <name>a glycoprotein</name>
        <dbReference type="ChEBI" id="CHEBI:17089"/>
    </ligand>
</feature>
<feature type="binding site" evidence="1">
    <location>
        <position position="704"/>
    </location>
    <ligand>
        <name>Ca(2+)</name>
        <dbReference type="ChEBI" id="CHEBI:29108"/>
    </ligand>
</feature>
<feature type="binding site" evidence="1">
    <location>
        <position position="707"/>
    </location>
    <ligand>
        <name>Ca(2+)</name>
        <dbReference type="ChEBI" id="CHEBI:29108"/>
    </ligand>
</feature>
<feature type="binding site" evidence="1">
    <location>
        <position position="829"/>
    </location>
    <ligand>
        <name>Ca(2+)</name>
        <dbReference type="ChEBI" id="CHEBI:29108"/>
    </ligand>
</feature>
<feature type="sequence conflict" description="In Ref. 1; ANI26087." evidence="7" ref="1">
    <original>M</original>
    <variation>V</variation>
    <location>
        <position position="20"/>
    </location>
</feature>
<sequence>MDKRLLVKRTLGCVCAATLMGAILATHHDSLISVKAEEKTVQTGKTDQQIGAKLVQEIREGKRGPLYAGYFRTWHDRASTGADGKQQHPENTMAEVPKEVDILFVFHDHTASDSPFWSELKDSYVHKLHQQGTALVQTIGVNELNGRTGLSKDYPDIPEGNKALAAAIVKTFVTDRGVDGLDIDIEHEFTNKRTPEEDARALNVFKEIAQLIGKNGSDKSKLLIMDTTLSVENNPIFKGIAEDLDYLLRQYYGSQGGEAEVDTINSDWNQYQNYIDASQFMIGFSFFEESAPKGNLWFDVNEYDPKNPERGKDIEGTRAKKYAEWQPSTGGLKAGIFSYAIDRDGVAHVGKEYSQRTYQELEAGLKKHPVVDNISHTDYTVSRKLKALMAEDKRYDVIDQKDIPDAALREQVIQQVGQYKGDLERYNKTLVLTVDKIHSLKGLEKLSHLQKLELCQLSNVKEVTPDILPESMKKDAELVMTGMTGLEKLNLRGLNRQTLDGIDVNGLTHLTSFDISHNSLDLSEKSADRKLLMTLMEQVSNHQKITVKNTAFENQKPKGYYPQTYDTKEGHYDVDNAEHDILTDFVFGTVTKRDTFIGDEEAFAMYKEGAIDGRQYVAKDYTYEAFRKDYQGYKVHLTASNLGESDTSKVTATTDETYLVDVFDGEKIVPHMTLHVGNGATIMENLAKGAKVIGTSGDISLAEKVVDGVVADSFWTWDTKNWIAFDLNSQVIAKEWRLFNGETDPRFKDKELNIQKGRLQILKDKTIHLENMSKDERDSYLADEQNWITVSEITSNQKIYNGSITDITSRYWRFCVDEGVSSKSPQYTELQILGQRLSSDIASTVQD</sequence>
<dbReference type="EC" id="3.2.1.96" evidence="8"/>
<dbReference type="EMBL" id="KT071706">
    <property type="protein sequence ID" value="ANI26086.1"/>
    <property type="molecule type" value="Genomic_DNA"/>
</dbReference>
<dbReference type="EMBL" id="KT071707">
    <property type="protein sequence ID" value="ANI26087.1"/>
    <property type="molecule type" value="Genomic_DNA"/>
</dbReference>
<dbReference type="SMR" id="A0A191T6Q6"/>
<dbReference type="GO" id="GO:0005576">
    <property type="term" value="C:extracellular region"/>
    <property type="evidence" value="ECO:0007669"/>
    <property type="project" value="UniProtKB-SubCell"/>
</dbReference>
<dbReference type="GO" id="GO:0043655">
    <property type="term" value="C:host extracellular space"/>
    <property type="evidence" value="ECO:0007669"/>
    <property type="project" value="UniProtKB-SubCell"/>
</dbReference>
<dbReference type="GO" id="GO:0033925">
    <property type="term" value="F:mannosyl-glycoprotein endo-beta-N-acetylglucosaminidase activity"/>
    <property type="evidence" value="ECO:0000314"/>
    <property type="project" value="UniProtKB"/>
</dbReference>
<dbReference type="GO" id="GO:0046872">
    <property type="term" value="F:metal ion binding"/>
    <property type="evidence" value="ECO:0007669"/>
    <property type="project" value="UniProtKB-KW"/>
</dbReference>
<dbReference type="GO" id="GO:0005975">
    <property type="term" value="P:carbohydrate metabolic process"/>
    <property type="evidence" value="ECO:0007669"/>
    <property type="project" value="InterPro"/>
</dbReference>
<dbReference type="GO" id="GO:0042783">
    <property type="term" value="P:symbiont-mediated evasion of host immune response"/>
    <property type="evidence" value="ECO:0000314"/>
    <property type="project" value="UniProtKB"/>
</dbReference>
<dbReference type="Gene3D" id="2.60.120.260">
    <property type="entry name" value="Galactose-binding domain-like"/>
    <property type="match status" value="1"/>
</dbReference>
<dbReference type="Gene3D" id="3.20.20.80">
    <property type="entry name" value="Glycosidases"/>
    <property type="match status" value="1"/>
</dbReference>
<dbReference type="Gene3D" id="3.80.10.10">
    <property type="entry name" value="Ribonuclease Inhibitor"/>
    <property type="match status" value="1"/>
</dbReference>
<dbReference type="InterPro" id="IPR049410">
    <property type="entry name" value="EndoS-like_Ig-like"/>
</dbReference>
<dbReference type="InterPro" id="IPR057016">
    <property type="entry name" value="EndoS_F2-like_TIM-barrel"/>
</dbReference>
<dbReference type="InterPro" id="IPR001579">
    <property type="entry name" value="Glyco_hydro_18_chit_AS"/>
</dbReference>
<dbReference type="InterPro" id="IPR017853">
    <property type="entry name" value="Glycoside_hydrolase_SF"/>
</dbReference>
<dbReference type="InterPro" id="IPR032675">
    <property type="entry name" value="LRR_dom_sf"/>
</dbReference>
<dbReference type="Pfam" id="PF20746">
    <property type="entry name" value="EndoS_Ig-like"/>
    <property type="match status" value="1"/>
</dbReference>
<dbReference type="Pfam" id="PF23952">
    <property type="entry name" value="LRR_EndoS"/>
    <property type="match status" value="1"/>
</dbReference>
<dbReference type="Pfam" id="PF23916">
    <property type="entry name" value="TIM-barrel_EndoS"/>
    <property type="match status" value="1"/>
</dbReference>
<dbReference type="SUPFAM" id="SSF51445">
    <property type="entry name" value="(Trans)glycosidases"/>
    <property type="match status" value="1"/>
</dbReference>
<dbReference type="SUPFAM" id="SSF52058">
    <property type="entry name" value="L domain-like"/>
    <property type="match status" value="1"/>
</dbReference>
<dbReference type="PROSITE" id="PS01095">
    <property type="entry name" value="GH18_1"/>
    <property type="match status" value="1"/>
</dbReference>
<protein>
    <recommendedName>
        <fullName evidence="7">Endo-beta-N-acetylglucosaminidase EndoSd</fullName>
        <ecNumber evidence="8">3.2.1.96</ecNumber>
    </recommendedName>
    <alternativeName>
        <fullName evidence="6">Endoglycosidase Sd</fullName>
    </alternativeName>
</protein>
<accession>A0A191T6Q6</accession>
<accession>A0A191T6S1</accession>